<sequence length="485" mass="54939">MKNATIVMSVRREQGSSSGEGSLSFEDVAVGFTREEWQFLDQSQKVLYKEVMLENYINLVSIGYRGTKPDSLFKLEQGEPPGIAEGAAHSQICPGFVIQSRRYAGKDSDAFGGYGRSCLHIKRDKTLTGVKYHRCVKPSSPKSQLNDLQKICAGGKPHECSVCGRAFSRKAQLIQHQRTERGEKPHGCGECGKTFMRKIQLTEHQRTHTGEKPHECSECGKAFSRKSQLMVHQRTHTGEKPYRCSKCGKAFSRKCRLNRHQRSHTGEKLYGCSVCGKAFSQKAYLTAHQRLHTGDKPYKCSDCGRTFYFKSDLTRHQRIHTGEKPYECSECEKAFRSKSKLIQHQRTHTGERPYSCRECGKAFAHMSVLIKHEKTHIRETAINSLTVEKPSSRSHTSLYMSELIQEQKTVNTVPIEMPSSGTPPLLNKSERLVGRNVVIVEQPFPRNQAFVVNQEFEQRISLTNEVNVAPSVINYILYLTDIVSE</sequence>
<name>ZN577_HUMAN</name>
<accession>Q9BSK1</accession>
<accession>A8K0B4</accession>
<accession>A8K6Z7</accession>
<accession>C9JFB9</accession>
<organism>
    <name type="scientific">Homo sapiens</name>
    <name type="common">Human</name>
    <dbReference type="NCBI Taxonomy" id="9606"/>
    <lineage>
        <taxon>Eukaryota</taxon>
        <taxon>Metazoa</taxon>
        <taxon>Chordata</taxon>
        <taxon>Craniata</taxon>
        <taxon>Vertebrata</taxon>
        <taxon>Euteleostomi</taxon>
        <taxon>Mammalia</taxon>
        <taxon>Eutheria</taxon>
        <taxon>Euarchontoglires</taxon>
        <taxon>Primates</taxon>
        <taxon>Haplorrhini</taxon>
        <taxon>Catarrhini</taxon>
        <taxon>Hominidae</taxon>
        <taxon>Homo</taxon>
    </lineage>
</organism>
<protein>
    <recommendedName>
        <fullName>Zinc finger protein 577</fullName>
    </recommendedName>
</protein>
<gene>
    <name type="primary">ZNF577</name>
</gene>
<keyword id="KW-0025">Alternative splicing</keyword>
<keyword id="KW-0238">DNA-binding</keyword>
<keyword id="KW-0479">Metal-binding</keyword>
<keyword id="KW-0539">Nucleus</keyword>
<keyword id="KW-1267">Proteomics identification</keyword>
<keyword id="KW-1185">Reference proteome</keyword>
<keyword id="KW-0677">Repeat</keyword>
<keyword id="KW-0804">Transcription</keyword>
<keyword id="KW-0805">Transcription regulation</keyword>
<keyword id="KW-0862">Zinc</keyword>
<keyword id="KW-0863">Zinc-finger</keyword>
<proteinExistence type="evidence at protein level"/>
<evidence type="ECO:0000255" key="1">
    <source>
        <dbReference type="PROSITE-ProRule" id="PRU00042"/>
    </source>
</evidence>
<evidence type="ECO:0000255" key="2">
    <source>
        <dbReference type="PROSITE-ProRule" id="PRU00119"/>
    </source>
</evidence>
<evidence type="ECO:0000256" key="3">
    <source>
        <dbReference type="SAM" id="MobiDB-lite"/>
    </source>
</evidence>
<evidence type="ECO:0000269" key="4">
    <source>
    </source>
</evidence>
<evidence type="ECO:0000303" key="5">
    <source>
    </source>
</evidence>
<evidence type="ECO:0000305" key="6"/>
<reference key="1">
    <citation type="journal article" date="2004" name="Nat. Genet.">
        <title>Complete sequencing and characterization of 21,243 full-length human cDNAs.</title>
        <authorList>
            <person name="Ota T."/>
            <person name="Suzuki Y."/>
            <person name="Nishikawa T."/>
            <person name="Otsuki T."/>
            <person name="Sugiyama T."/>
            <person name="Irie R."/>
            <person name="Wakamatsu A."/>
            <person name="Hayashi K."/>
            <person name="Sato H."/>
            <person name="Nagai K."/>
            <person name="Kimura K."/>
            <person name="Makita H."/>
            <person name="Sekine M."/>
            <person name="Obayashi M."/>
            <person name="Nishi T."/>
            <person name="Shibahara T."/>
            <person name="Tanaka T."/>
            <person name="Ishii S."/>
            <person name="Yamamoto J."/>
            <person name="Saito K."/>
            <person name="Kawai Y."/>
            <person name="Isono Y."/>
            <person name="Nakamura Y."/>
            <person name="Nagahari K."/>
            <person name="Murakami K."/>
            <person name="Yasuda T."/>
            <person name="Iwayanagi T."/>
            <person name="Wagatsuma M."/>
            <person name="Shiratori A."/>
            <person name="Sudo H."/>
            <person name="Hosoiri T."/>
            <person name="Kaku Y."/>
            <person name="Kodaira H."/>
            <person name="Kondo H."/>
            <person name="Sugawara M."/>
            <person name="Takahashi M."/>
            <person name="Kanda K."/>
            <person name="Yokoi T."/>
            <person name="Furuya T."/>
            <person name="Kikkawa E."/>
            <person name="Omura Y."/>
            <person name="Abe K."/>
            <person name="Kamihara K."/>
            <person name="Katsuta N."/>
            <person name="Sato K."/>
            <person name="Tanikawa M."/>
            <person name="Yamazaki M."/>
            <person name="Ninomiya K."/>
            <person name="Ishibashi T."/>
            <person name="Yamashita H."/>
            <person name="Murakawa K."/>
            <person name="Fujimori K."/>
            <person name="Tanai H."/>
            <person name="Kimata M."/>
            <person name="Watanabe M."/>
            <person name="Hiraoka S."/>
            <person name="Chiba Y."/>
            <person name="Ishida S."/>
            <person name="Ono Y."/>
            <person name="Takiguchi S."/>
            <person name="Watanabe S."/>
            <person name="Yosida M."/>
            <person name="Hotuta T."/>
            <person name="Kusano J."/>
            <person name="Kanehori K."/>
            <person name="Takahashi-Fujii A."/>
            <person name="Hara H."/>
            <person name="Tanase T.-O."/>
            <person name="Nomura Y."/>
            <person name="Togiya S."/>
            <person name="Komai F."/>
            <person name="Hara R."/>
            <person name="Takeuchi K."/>
            <person name="Arita M."/>
            <person name="Imose N."/>
            <person name="Musashino K."/>
            <person name="Yuuki H."/>
            <person name="Oshima A."/>
            <person name="Sasaki N."/>
            <person name="Aotsuka S."/>
            <person name="Yoshikawa Y."/>
            <person name="Matsunawa H."/>
            <person name="Ichihara T."/>
            <person name="Shiohata N."/>
            <person name="Sano S."/>
            <person name="Moriya S."/>
            <person name="Momiyama H."/>
            <person name="Satoh N."/>
            <person name="Takami S."/>
            <person name="Terashima Y."/>
            <person name="Suzuki O."/>
            <person name="Nakagawa S."/>
            <person name="Senoh A."/>
            <person name="Mizoguchi H."/>
            <person name="Goto Y."/>
            <person name="Shimizu F."/>
            <person name="Wakebe H."/>
            <person name="Hishigaki H."/>
            <person name="Watanabe T."/>
            <person name="Sugiyama A."/>
            <person name="Takemoto M."/>
            <person name="Kawakami B."/>
            <person name="Yamazaki M."/>
            <person name="Watanabe K."/>
            <person name="Kumagai A."/>
            <person name="Itakura S."/>
            <person name="Fukuzumi Y."/>
            <person name="Fujimori Y."/>
            <person name="Komiyama M."/>
            <person name="Tashiro H."/>
            <person name="Tanigami A."/>
            <person name="Fujiwara T."/>
            <person name="Ono T."/>
            <person name="Yamada K."/>
            <person name="Fujii Y."/>
            <person name="Ozaki K."/>
            <person name="Hirao M."/>
            <person name="Ohmori Y."/>
            <person name="Kawabata A."/>
            <person name="Hikiji T."/>
            <person name="Kobatake N."/>
            <person name="Inagaki H."/>
            <person name="Ikema Y."/>
            <person name="Okamoto S."/>
            <person name="Okitani R."/>
            <person name="Kawakami T."/>
            <person name="Noguchi S."/>
            <person name="Itoh T."/>
            <person name="Shigeta K."/>
            <person name="Senba T."/>
            <person name="Matsumura K."/>
            <person name="Nakajima Y."/>
            <person name="Mizuno T."/>
            <person name="Morinaga M."/>
            <person name="Sasaki M."/>
            <person name="Togashi T."/>
            <person name="Oyama M."/>
            <person name="Hata H."/>
            <person name="Watanabe M."/>
            <person name="Komatsu T."/>
            <person name="Mizushima-Sugano J."/>
            <person name="Satoh T."/>
            <person name="Shirai Y."/>
            <person name="Takahashi Y."/>
            <person name="Nakagawa K."/>
            <person name="Okumura K."/>
            <person name="Nagase T."/>
            <person name="Nomura N."/>
            <person name="Kikuchi H."/>
            <person name="Masuho Y."/>
            <person name="Yamashita R."/>
            <person name="Nakai K."/>
            <person name="Yada T."/>
            <person name="Nakamura Y."/>
            <person name="Ohara O."/>
            <person name="Isogai T."/>
            <person name="Sugano S."/>
        </authorList>
    </citation>
    <scope>NUCLEOTIDE SEQUENCE [LARGE SCALE MRNA] (ISOFORMS 1 AND 2)</scope>
    <source>
        <tissue>Cerebellum</tissue>
        <tissue>Prostate</tissue>
    </source>
</reference>
<reference key="2">
    <citation type="journal article" date="2004" name="Nature">
        <title>The DNA sequence and biology of human chromosome 19.</title>
        <authorList>
            <person name="Grimwood J."/>
            <person name="Gordon L.A."/>
            <person name="Olsen A.S."/>
            <person name="Terry A."/>
            <person name="Schmutz J."/>
            <person name="Lamerdin J.E."/>
            <person name="Hellsten U."/>
            <person name="Goodstein D."/>
            <person name="Couronne O."/>
            <person name="Tran-Gyamfi M."/>
            <person name="Aerts A."/>
            <person name="Altherr M."/>
            <person name="Ashworth L."/>
            <person name="Bajorek E."/>
            <person name="Black S."/>
            <person name="Branscomb E."/>
            <person name="Caenepeel S."/>
            <person name="Carrano A.V."/>
            <person name="Caoile C."/>
            <person name="Chan Y.M."/>
            <person name="Christensen M."/>
            <person name="Cleland C.A."/>
            <person name="Copeland A."/>
            <person name="Dalin E."/>
            <person name="Dehal P."/>
            <person name="Denys M."/>
            <person name="Detter J.C."/>
            <person name="Escobar J."/>
            <person name="Flowers D."/>
            <person name="Fotopulos D."/>
            <person name="Garcia C."/>
            <person name="Georgescu A.M."/>
            <person name="Glavina T."/>
            <person name="Gomez M."/>
            <person name="Gonzales E."/>
            <person name="Groza M."/>
            <person name="Hammon N."/>
            <person name="Hawkins T."/>
            <person name="Haydu L."/>
            <person name="Ho I."/>
            <person name="Huang W."/>
            <person name="Israni S."/>
            <person name="Jett J."/>
            <person name="Kadner K."/>
            <person name="Kimball H."/>
            <person name="Kobayashi A."/>
            <person name="Larionov V."/>
            <person name="Leem S.-H."/>
            <person name="Lopez F."/>
            <person name="Lou Y."/>
            <person name="Lowry S."/>
            <person name="Malfatti S."/>
            <person name="Martinez D."/>
            <person name="McCready P.M."/>
            <person name="Medina C."/>
            <person name="Morgan J."/>
            <person name="Nelson K."/>
            <person name="Nolan M."/>
            <person name="Ovcharenko I."/>
            <person name="Pitluck S."/>
            <person name="Pollard M."/>
            <person name="Popkie A.P."/>
            <person name="Predki P."/>
            <person name="Quan G."/>
            <person name="Ramirez L."/>
            <person name="Rash S."/>
            <person name="Retterer J."/>
            <person name="Rodriguez A."/>
            <person name="Rogers S."/>
            <person name="Salamov A."/>
            <person name="Salazar A."/>
            <person name="She X."/>
            <person name="Smith D."/>
            <person name="Slezak T."/>
            <person name="Solovyev V."/>
            <person name="Thayer N."/>
            <person name="Tice H."/>
            <person name="Tsai M."/>
            <person name="Ustaszewska A."/>
            <person name="Vo N."/>
            <person name="Wagner M."/>
            <person name="Wheeler J."/>
            <person name="Wu K."/>
            <person name="Xie G."/>
            <person name="Yang J."/>
            <person name="Dubchak I."/>
            <person name="Furey T.S."/>
            <person name="DeJong P."/>
            <person name="Dickson M."/>
            <person name="Gordon D."/>
            <person name="Eichler E.E."/>
            <person name="Pennacchio L.A."/>
            <person name="Richardson P."/>
            <person name="Stubbs L."/>
            <person name="Rokhsar D.S."/>
            <person name="Myers R.M."/>
            <person name="Rubin E.M."/>
            <person name="Lucas S.M."/>
        </authorList>
    </citation>
    <scope>NUCLEOTIDE SEQUENCE [LARGE SCALE GENOMIC DNA]</scope>
</reference>
<reference key="3">
    <citation type="submission" date="2005-07" db="EMBL/GenBank/DDBJ databases">
        <authorList>
            <person name="Mural R.J."/>
            <person name="Istrail S."/>
            <person name="Sutton G.G."/>
            <person name="Florea L."/>
            <person name="Halpern A.L."/>
            <person name="Mobarry C.M."/>
            <person name="Lippert R."/>
            <person name="Walenz B."/>
            <person name="Shatkay H."/>
            <person name="Dew I."/>
            <person name="Miller J.R."/>
            <person name="Flanigan M.J."/>
            <person name="Edwards N.J."/>
            <person name="Bolanos R."/>
            <person name="Fasulo D."/>
            <person name="Halldorsson B.V."/>
            <person name="Hannenhalli S."/>
            <person name="Turner R."/>
            <person name="Yooseph S."/>
            <person name="Lu F."/>
            <person name="Nusskern D.R."/>
            <person name="Shue B.C."/>
            <person name="Zheng X.H."/>
            <person name="Zhong F."/>
            <person name="Delcher A.L."/>
            <person name="Huson D.H."/>
            <person name="Kravitz S.A."/>
            <person name="Mouchard L."/>
            <person name="Reinert K."/>
            <person name="Remington K.A."/>
            <person name="Clark A.G."/>
            <person name="Waterman M.S."/>
            <person name="Eichler E.E."/>
            <person name="Adams M.D."/>
            <person name="Hunkapiller M.W."/>
            <person name="Myers E.W."/>
            <person name="Venter J.C."/>
        </authorList>
    </citation>
    <scope>NUCLEOTIDE SEQUENCE [LARGE SCALE GENOMIC DNA]</scope>
</reference>
<reference key="4">
    <citation type="journal article" date="2004" name="Genome Res.">
        <title>The status, quality, and expansion of the NIH full-length cDNA project: the Mammalian Gene Collection (MGC).</title>
        <authorList>
            <consortium name="The MGC Project Team"/>
        </authorList>
    </citation>
    <scope>NUCLEOTIDE SEQUENCE [LARGE SCALE MRNA] (ISOFORM 1)</scope>
    <scope>VARIANTS VAL-84; CYS-123 AND GLU-246</scope>
    <source>
        <tissue>Skin</tissue>
    </source>
</reference>
<dbReference type="EMBL" id="AK289479">
    <property type="protein sequence ID" value="BAF82168.1"/>
    <property type="status" value="ALT_INIT"/>
    <property type="molecule type" value="mRNA"/>
</dbReference>
<dbReference type="EMBL" id="AK291812">
    <property type="protein sequence ID" value="BAF84501.1"/>
    <property type="molecule type" value="mRNA"/>
</dbReference>
<dbReference type="EMBL" id="AC006272">
    <property type="status" value="NOT_ANNOTATED_CDS"/>
    <property type="molecule type" value="Genomic_DNA"/>
</dbReference>
<dbReference type="EMBL" id="AC011460">
    <property type="status" value="NOT_ANNOTATED_CDS"/>
    <property type="molecule type" value="Genomic_DNA"/>
</dbReference>
<dbReference type="EMBL" id="AC074141">
    <property type="status" value="NOT_ANNOTATED_CDS"/>
    <property type="molecule type" value="Genomic_DNA"/>
</dbReference>
<dbReference type="EMBL" id="CH471135">
    <property type="protein sequence ID" value="EAW72049.1"/>
    <property type="status" value="ALT_SEQ"/>
    <property type="molecule type" value="Genomic_DNA"/>
</dbReference>
<dbReference type="EMBL" id="BC004992">
    <property type="protein sequence ID" value="AAH04992.1"/>
    <property type="status" value="ALT_INIT"/>
    <property type="molecule type" value="mRNA"/>
</dbReference>
<dbReference type="CCDS" id="CCDS12842.2">
    <molecule id="Q9BSK1-1"/>
</dbReference>
<dbReference type="CCDS" id="CCDS46160.1">
    <molecule id="Q9BSK1-2"/>
</dbReference>
<dbReference type="RefSeq" id="NP_001129062.1">
    <molecule id="Q9BSK1-2"/>
    <property type="nucleotide sequence ID" value="NM_001135590.2"/>
</dbReference>
<dbReference type="RefSeq" id="NP_001357376.1">
    <molecule id="Q9BSK1-1"/>
    <property type="nucleotide sequence ID" value="NM_001370447.1"/>
</dbReference>
<dbReference type="RefSeq" id="NP_001357377.1">
    <molecule id="Q9BSK1-1"/>
    <property type="nucleotide sequence ID" value="NM_001370448.1"/>
</dbReference>
<dbReference type="RefSeq" id="NP_001357378.1">
    <molecule id="Q9BSK1-1"/>
    <property type="nucleotide sequence ID" value="NM_001370449.1"/>
</dbReference>
<dbReference type="RefSeq" id="NP_001357379.1">
    <molecule id="Q9BSK1-2"/>
    <property type="nucleotide sequence ID" value="NM_001370450.1"/>
</dbReference>
<dbReference type="RefSeq" id="NP_116068.2">
    <molecule id="Q9BSK1-1"/>
    <property type="nucleotide sequence ID" value="NM_032679.3"/>
</dbReference>
<dbReference type="RefSeq" id="XP_006723495.1">
    <property type="nucleotide sequence ID" value="XM_006723432.3"/>
</dbReference>
<dbReference type="RefSeq" id="XP_006723496.1">
    <property type="nucleotide sequence ID" value="XM_006723433.2"/>
</dbReference>
<dbReference type="RefSeq" id="XP_011525710.1">
    <property type="nucleotide sequence ID" value="XM_011527408.2"/>
</dbReference>
<dbReference type="RefSeq" id="XP_016882876.1">
    <property type="nucleotide sequence ID" value="XM_017027387.1"/>
</dbReference>
<dbReference type="RefSeq" id="XP_047295506.1">
    <molecule id="Q9BSK1-1"/>
    <property type="nucleotide sequence ID" value="XM_047439550.1"/>
</dbReference>
<dbReference type="RefSeq" id="XP_047295507.1">
    <molecule id="Q9BSK1-2"/>
    <property type="nucleotide sequence ID" value="XM_047439551.1"/>
</dbReference>
<dbReference type="RefSeq" id="XP_054178379.1">
    <molecule id="Q9BSK1-1"/>
    <property type="nucleotide sequence ID" value="XM_054322404.1"/>
</dbReference>
<dbReference type="RefSeq" id="XP_054178380.1">
    <molecule id="Q9BSK1-2"/>
    <property type="nucleotide sequence ID" value="XM_054322405.1"/>
</dbReference>
<dbReference type="SMR" id="Q9BSK1"/>
<dbReference type="BioGRID" id="124246">
    <property type="interactions" value="5"/>
</dbReference>
<dbReference type="FunCoup" id="Q9BSK1">
    <property type="interactions" value="1"/>
</dbReference>
<dbReference type="IntAct" id="Q9BSK1">
    <property type="interactions" value="26"/>
</dbReference>
<dbReference type="STRING" id="9606.ENSP00000301399"/>
<dbReference type="GlyGen" id="Q9BSK1">
    <property type="glycosylation" value="1 site"/>
</dbReference>
<dbReference type="iPTMnet" id="Q9BSK1"/>
<dbReference type="PhosphoSitePlus" id="Q9BSK1"/>
<dbReference type="BioMuta" id="ZNF577"/>
<dbReference type="DMDM" id="294862491"/>
<dbReference type="jPOST" id="Q9BSK1"/>
<dbReference type="MassIVE" id="Q9BSK1"/>
<dbReference type="PaxDb" id="9606-ENSP00000301399"/>
<dbReference type="PeptideAtlas" id="Q9BSK1"/>
<dbReference type="ProteomicsDB" id="78909">
    <molecule id="Q9BSK1-1"/>
</dbReference>
<dbReference type="ProteomicsDB" id="78910">
    <molecule id="Q9BSK1-2"/>
</dbReference>
<dbReference type="Antibodypedia" id="19054">
    <property type="antibodies" value="65 antibodies from 20 providers"/>
</dbReference>
<dbReference type="DNASU" id="84765"/>
<dbReference type="Ensembl" id="ENST00000301399.12">
    <molecule id="Q9BSK1-1"/>
    <property type="protein sequence ID" value="ENSP00000301399.5"/>
    <property type="gene ID" value="ENSG00000161551.15"/>
</dbReference>
<dbReference type="Ensembl" id="ENST00000451628.9">
    <molecule id="Q9BSK1-2"/>
    <property type="protein sequence ID" value="ENSP00000389652.2"/>
    <property type="gene ID" value="ENSG00000161551.15"/>
</dbReference>
<dbReference type="Ensembl" id="ENST00000638348.2">
    <molecule id="Q9BSK1-1"/>
    <property type="protein sequence ID" value="ENSP00000491936.2"/>
    <property type="gene ID" value="ENSG00000161551.15"/>
</dbReference>
<dbReference type="Ensembl" id="ENST00000639636.2">
    <molecule id="Q9BSK1-2"/>
    <property type="protein sequence ID" value="ENSP00000491349.1"/>
    <property type="gene ID" value="ENSG00000161551.15"/>
</dbReference>
<dbReference type="GeneID" id="84765"/>
<dbReference type="KEGG" id="hsa:84765"/>
<dbReference type="MANE-Select" id="ENST00000638348.2">
    <property type="protein sequence ID" value="ENSP00000491936.2"/>
    <property type="RefSeq nucleotide sequence ID" value="NM_001370449.1"/>
    <property type="RefSeq protein sequence ID" value="NP_001357378.1"/>
</dbReference>
<dbReference type="UCSC" id="uc002pxx.6">
    <molecule id="Q9BSK1-1"/>
    <property type="organism name" value="human"/>
</dbReference>
<dbReference type="AGR" id="HGNC:28673"/>
<dbReference type="CTD" id="84765"/>
<dbReference type="DisGeNET" id="84765"/>
<dbReference type="GeneCards" id="ZNF577"/>
<dbReference type="HGNC" id="HGNC:28673">
    <property type="gene designation" value="ZNF577"/>
</dbReference>
<dbReference type="HPA" id="ENSG00000161551">
    <property type="expression patterns" value="Low tissue specificity"/>
</dbReference>
<dbReference type="neXtProt" id="NX_Q9BSK1"/>
<dbReference type="OpenTargets" id="ENSG00000161551"/>
<dbReference type="PharmGKB" id="PA134942499"/>
<dbReference type="VEuPathDB" id="HostDB:ENSG00000161551"/>
<dbReference type="eggNOG" id="KOG1721">
    <property type="taxonomic scope" value="Eukaryota"/>
</dbReference>
<dbReference type="GeneTree" id="ENSGT00940000163379"/>
<dbReference type="HOGENOM" id="CLU_002678_0_2_1"/>
<dbReference type="InParanoid" id="Q9BSK1"/>
<dbReference type="OMA" id="EFAQGIS"/>
<dbReference type="PAN-GO" id="Q9BSK1">
    <property type="GO annotations" value="4 GO annotations based on evolutionary models"/>
</dbReference>
<dbReference type="PhylomeDB" id="Q9BSK1"/>
<dbReference type="TreeFam" id="TF337922"/>
<dbReference type="PathwayCommons" id="Q9BSK1"/>
<dbReference type="Reactome" id="R-HSA-212436">
    <property type="pathway name" value="Generic Transcription Pathway"/>
</dbReference>
<dbReference type="SignaLink" id="Q9BSK1"/>
<dbReference type="BioGRID-ORCS" id="84765">
    <property type="hits" value="21 hits in 1171 CRISPR screens"/>
</dbReference>
<dbReference type="ChiTaRS" id="ZNF577">
    <property type="organism name" value="human"/>
</dbReference>
<dbReference type="GenomeRNAi" id="84765"/>
<dbReference type="Pharos" id="Q9BSK1">
    <property type="development level" value="Tdark"/>
</dbReference>
<dbReference type="PRO" id="PR:Q9BSK1"/>
<dbReference type="Proteomes" id="UP000005640">
    <property type="component" value="Chromosome 19"/>
</dbReference>
<dbReference type="RNAct" id="Q9BSK1">
    <property type="molecule type" value="protein"/>
</dbReference>
<dbReference type="Bgee" id="ENSG00000161551">
    <property type="expression patterns" value="Expressed in left testis and 132 other cell types or tissues"/>
</dbReference>
<dbReference type="ExpressionAtlas" id="Q9BSK1">
    <property type="expression patterns" value="baseline and differential"/>
</dbReference>
<dbReference type="GO" id="GO:0005634">
    <property type="term" value="C:nucleus"/>
    <property type="evidence" value="ECO:0000318"/>
    <property type="project" value="GO_Central"/>
</dbReference>
<dbReference type="GO" id="GO:0000981">
    <property type="term" value="F:DNA-binding transcription factor activity, RNA polymerase II-specific"/>
    <property type="evidence" value="ECO:0000318"/>
    <property type="project" value="GO_Central"/>
</dbReference>
<dbReference type="GO" id="GO:0000978">
    <property type="term" value="F:RNA polymerase II cis-regulatory region sequence-specific DNA binding"/>
    <property type="evidence" value="ECO:0000318"/>
    <property type="project" value="GO_Central"/>
</dbReference>
<dbReference type="GO" id="GO:0008270">
    <property type="term" value="F:zinc ion binding"/>
    <property type="evidence" value="ECO:0007669"/>
    <property type="project" value="UniProtKB-KW"/>
</dbReference>
<dbReference type="GO" id="GO:0006357">
    <property type="term" value="P:regulation of transcription by RNA polymerase II"/>
    <property type="evidence" value="ECO:0000318"/>
    <property type="project" value="GO_Central"/>
</dbReference>
<dbReference type="CDD" id="cd07765">
    <property type="entry name" value="KRAB_A-box"/>
    <property type="match status" value="1"/>
</dbReference>
<dbReference type="FunFam" id="3.30.160.60:FF:000557">
    <property type="entry name" value="zinc finger and SCAN domain-containing protein 29"/>
    <property type="match status" value="1"/>
</dbReference>
<dbReference type="FunFam" id="3.30.160.60:FF:000139">
    <property type="entry name" value="zinc finger protein 1 homolog"/>
    <property type="match status" value="1"/>
</dbReference>
<dbReference type="FunFam" id="3.30.160.60:FF:002343">
    <property type="entry name" value="Zinc finger protein 33A"/>
    <property type="match status" value="2"/>
</dbReference>
<dbReference type="FunFam" id="3.30.160.60:FF:000384">
    <property type="entry name" value="Zinc finger protein 550"/>
    <property type="match status" value="3"/>
</dbReference>
<dbReference type="FunFam" id="3.30.160.60:FF:001157">
    <property type="entry name" value="Zinc finger protein 793"/>
    <property type="match status" value="1"/>
</dbReference>
<dbReference type="Gene3D" id="6.10.140.140">
    <property type="match status" value="1"/>
</dbReference>
<dbReference type="Gene3D" id="3.30.160.60">
    <property type="entry name" value="Classic Zinc Finger"/>
    <property type="match status" value="8"/>
</dbReference>
<dbReference type="InterPro" id="IPR001909">
    <property type="entry name" value="KRAB"/>
</dbReference>
<dbReference type="InterPro" id="IPR036051">
    <property type="entry name" value="KRAB_dom_sf"/>
</dbReference>
<dbReference type="InterPro" id="IPR036236">
    <property type="entry name" value="Znf_C2H2_sf"/>
</dbReference>
<dbReference type="InterPro" id="IPR013087">
    <property type="entry name" value="Znf_C2H2_type"/>
</dbReference>
<dbReference type="PANTHER" id="PTHR24381">
    <property type="entry name" value="ZINC FINGER PROTEIN"/>
    <property type="match status" value="1"/>
</dbReference>
<dbReference type="PANTHER" id="PTHR24381:SF400">
    <property type="entry name" value="ZINC FINGER PROTEIN 487-RELATED"/>
    <property type="match status" value="1"/>
</dbReference>
<dbReference type="Pfam" id="PF01352">
    <property type="entry name" value="KRAB"/>
    <property type="match status" value="1"/>
</dbReference>
<dbReference type="Pfam" id="PF00096">
    <property type="entry name" value="zf-C2H2"/>
    <property type="match status" value="8"/>
</dbReference>
<dbReference type="SMART" id="SM00349">
    <property type="entry name" value="KRAB"/>
    <property type="match status" value="1"/>
</dbReference>
<dbReference type="SMART" id="SM00355">
    <property type="entry name" value="ZnF_C2H2"/>
    <property type="match status" value="8"/>
</dbReference>
<dbReference type="SUPFAM" id="SSF57667">
    <property type="entry name" value="beta-beta-alpha zinc fingers"/>
    <property type="match status" value="5"/>
</dbReference>
<dbReference type="SUPFAM" id="SSF109640">
    <property type="entry name" value="KRAB domain (Kruppel-associated box)"/>
    <property type="match status" value="1"/>
</dbReference>
<dbReference type="PROSITE" id="PS50805">
    <property type="entry name" value="KRAB"/>
    <property type="match status" value="1"/>
</dbReference>
<dbReference type="PROSITE" id="PS00028">
    <property type="entry name" value="ZINC_FINGER_C2H2_1"/>
    <property type="match status" value="7"/>
</dbReference>
<dbReference type="PROSITE" id="PS50157">
    <property type="entry name" value="ZINC_FINGER_C2H2_2"/>
    <property type="match status" value="8"/>
</dbReference>
<comment type="function">
    <text>May be involved in transcriptional regulation.</text>
</comment>
<comment type="interaction">
    <interactant intactId="EBI-21238334">
        <id>Q9BSK1</id>
    </interactant>
    <interactant intactId="EBI-286735">
        <id>O95373</id>
        <label>IPO7</label>
    </interactant>
    <organismsDiffer>false</organismsDiffer>
    <experiments>2</experiments>
</comment>
<comment type="subcellular location">
    <subcellularLocation>
        <location evidence="6">Nucleus</location>
    </subcellularLocation>
</comment>
<comment type="alternative products">
    <event type="alternative splicing"/>
    <isoform>
        <id>Q9BSK1-1</id>
        <name>1</name>
        <sequence type="displayed"/>
    </isoform>
    <isoform>
        <id>Q9BSK1-2</id>
        <name>2</name>
        <sequence type="described" ref="VSP_040810"/>
    </isoform>
</comment>
<comment type="similarity">
    <text evidence="6">Belongs to the krueppel C2H2-type zinc-finger protein family.</text>
</comment>
<comment type="caution">
    <text evidence="6">It is uncertain whether Met-1 or Met-8 is the initiator.</text>
</comment>
<comment type="sequence caution" evidence="6">
    <conflict type="erroneous initiation">
        <sequence resource="EMBL-CDS" id="AAH04992"/>
    </conflict>
    <text>Truncated N-terminus.</text>
</comment>
<comment type="sequence caution" evidence="6">
    <conflict type="erroneous initiation">
        <sequence resource="EMBL-CDS" id="BAF82168"/>
    </conflict>
    <text>Truncated N-terminus.</text>
</comment>
<comment type="sequence caution" evidence="6">
    <conflict type="erroneous gene model prediction">
        <sequence resource="EMBL-CDS" id="EAW72049"/>
    </conflict>
</comment>
<feature type="chain" id="PRO_0000234590" description="Zinc finger protein 577">
    <location>
        <begin position="1"/>
        <end position="485"/>
    </location>
</feature>
<feature type="domain" description="KRAB" evidence="2">
    <location>
        <begin position="23"/>
        <end position="94"/>
    </location>
</feature>
<feature type="zinc finger region" description="C2H2-type 1; degenerate" evidence="1">
    <location>
        <begin position="158"/>
        <end position="180"/>
    </location>
</feature>
<feature type="zinc finger region" description="C2H2-type 2" evidence="1">
    <location>
        <begin position="186"/>
        <end position="208"/>
    </location>
</feature>
<feature type="zinc finger region" description="C2H2-type 3" evidence="1">
    <location>
        <begin position="214"/>
        <end position="236"/>
    </location>
</feature>
<feature type="zinc finger region" description="C2H2-type 4" evidence="1">
    <location>
        <begin position="242"/>
        <end position="264"/>
    </location>
</feature>
<feature type="zinc finger region" description="C2H2-type 5" evidence="1">
    <location>
        <begin position="270"/>
        <end position="292"/>
    </location>
</feature>
<feature type="zinc finger region" description="C2H2-type 6" evidence="1">
    <location>
        <begin position="298"/>
        <end position="320"/>
    </location>
</feature>
<feature type="zinc finger region" description="C2H2-type 7" evidence="1">
    <location>
        <begin position="326"/>
        <end position="348"/>
    </location>
</feature>
<feature type="zinc finger region" description="C2H2-type 8" evidence="1">
    <location>
        <begin position="354"/>
        <end position="376"/>
    </location>
</feature>
<feature type="region of interest" description="Disordered" evidence="3">
    <location>
        <begin position="1"/>
        <end position="21"/>
    </location>
</feature>
<feature type="splice variant" id="VSP_040810" description="In isoform 2." evidence="5">
    <location>
        <begin position="95"/>
        <end position="153"/>
    </location>
</feature>
<feature type="sequence variant" id="VAR_055139" description="In dbSNP:rs17856123." evidence="4">
    <original>A</original>
    <variation>V</variation>
    <location>
        <position position="84"/>
    </location>
</feature>
<feature type="sequence variant" id="VAR_055140" description="In dbSNP:rs17849895." evidence="4">
    <original>R</original>
    <variation>C</variation>
    <location>
        <position position="123"/>
    </location>
</feature>
<feature type="sequence variant" id="VAR_055141" description="In dbSNP:rs9807847.">
    <original>R</original>
    <variation>K</variation>
    <location>
        <position position="234"/>
    </location>
</feature>
<feature type="sequence variant" id="VAR_055142" description="In dbSNP:rs2288868." evidence="4">
    <original>K</original>
    <variation>E</variation>
    <location>
        <position position="246"/>
    </location>
</feature>
<feature type="sequence variant" id="VAR_055143" description="In dbSNP:rs9807842.">
    <original>R</original>
    <variation>C</variation>
    <location>
        <position position="346"/>
    </location>
</feature>
<feature type="sequence variant" id="VAR_033577" description="In dbSNP:rs9807853.">
    <original>R</original>
    <variation>S</variation>
    <location>
        <position position="357"/>
    </location>
</feature>
<feature type="sequence variant" id="VAR_055144" description="In dbSNP:rs10407547.">
    <original>E</original>
    <variation>K</variation>
    <location>
        <position position="373"/>
    </location>
</feature>
<feature type="sequence variant" id="VAR_055145" description="In dbSNP:rs10407911.">
    <original>T</original>
    <variation>I</variation>
    <location>
        <position position="375"/>
    </location>
</feature>
<feature type="sequence conflict" description="In Ref. 1; BAF84501." evidence="6" ref="1">
    <original>E</original>
    <variation>G</variation>
    <location>
        <position position="50"/>
    </location>
</feature>